<sequence>MNLSLTLMTDVALALLLVMIAFWLPQLNIYTEKYSSYECGFDPMGSARLPFSMKFFLVAITFLLFDLEIALLLPLPWASQTTNLKLMLTMALLLISILAAGLAYEWSQKGLEWEE</sequence>
<geneLocation type="mitochondrion"/>
<proteinExistence type="inferred from homology"/>
<feature type="chain" id="PRO_0000323382" description="NADH-ubiquinone oxidoreductase chain 3">
    <location>
        <begin position="1"/>
        <end position="115"/>
    </location>
</feature>
<feature type="transmembrane region" description="Helical" evidence="3">
    <location>
        <begin position="5"/>
        <end position="25"/>
    </location>
</feature>
<feature type="transmembrane region" description="Helical" evidence="3">
    <location>
        <begin position="55"/>
        <end position="75"/>
    </location>
</feature>
<feature type="transmembrane region" description="Helical" evidence="3">
    <location>
        <begin position="86"/>
        <end position="106"/>
    </location>
</feature>
<feature type="sequence variant" description="In strain: Isolate BEMA8.">
    <original>A</original>
    <variation>V</variation>
    <location>
        <position position="12"/>
    </location>
</feature>
<gene>
    <name evidence="1" type="primary">MT-ND3</name>
    <name type="synonym">MTND3</name>
    <name type="synonym">NADH3</name>
    <name type="synonym">ND3</name>
</gene>
<name>NU3M_AVACL</name>
<organism>
    <name type="scientific">Avahi cleesei</name>
    <name type="common">Cleese's woolly lemur</name>
    <name type="synonym">Bemaraha woolly lemur</name>
    <dbReference type="NCBI Taxonomy" id="402244"/>
    <lineage>
        <taxon>Eukaryota</taxon>
        <taxon>Metazoa</taxon>
        <taxon>Chordata</taxon>
        <taxon>Craniata</taxon>
        <taxon>Vertebrata</taxon>
        <taxon>Euteleostomi</taxon>
        <taxon>Mammalia</taxon>
        <taxon>Eutheria</taxon>
        <taxon>Euarchontoglires</taxon>
        <taxon>Primates</taxon>
        <taxon>Strepsirrhini</taxon>
        <taxon>Lemuriformes</taxon>
        <taxon>Indriidae</taxon>
        <taxon>Avahi</taxon>
    </lineage>
</organism>
<dbReference type="EC" id="7.1.1.2" evidence="1"/>
<dbReference type="EMBL" id="DQ856113">
    <property type="protein sequence ID" value="ABI54995.1"/>
    <property type="molecule type" value="Genomic_DNA"/>
</dbReference>
<dbReference type="EMBL" id="DQ856114">
    <property type="protein sequence ID" value="ABI54999.1"/>
    <property type="molecule type" value="Genomic_DNA"/>
</dbReference>
<dbReference type="EMBL" id="DQ856115">
    <property type="protein sequence ID" value="ABI55003.1"/>
    <property type="molecule type" value="Genomic_DNA"/>
</dbReference>
<dbReference type="EMBL" id="DQ856116">
    <property type="protein sequence ID" value="ABI55007.1"/>
    <property type="molecule type" value="Genomic_DNA"/>
</dbReference>
<dbReference type="EMBL" id="DQ856117">
    <property type="protein sequence ID" value="ABI55011.1"/>
    <property type="molecule type" value="Genomic_DNA"/>
</dbReference>
<dbReference type="SMR" id="A8DQK7"/>
<dbReference type="GO" id="GO:0005743">
    <property type="term" value="C:mitochondrial inner membrane"/>
    <property type="evidence" value="ECO:0000250"/>
    <property type="project" value="UniProtKB"/>
</dbReference>
<dbReference type="GO" id="GO:0030964">
    <property type="term" value="C:NADH dehydrogenase complex"/>
    <property type="evidence" value="ECO:0007669"/>
    <property type="project" value="TreeGrafter"/>
</dbReference>
<dbReference type="GO" id="GO:0008137">
    <property type="term" value="F:NADH dehydrogenase (ubiquinone) activity"/>
    <property type="evidence" value="ECO:0000250"/>
    <property type="project" value="UniProtKB"/>
</dbReference>
<dbReference type="GO" id="GO:0006120">
    <property type="term" value="P:mitochondrial electron transport, NADH to ubiquinone"/>
    <property type="evidence" value="ECO:0000250"/>
    <property type="project" value="UniProtKB"/>
</dbReference>
<dbReference type="FunFam" id="1.20.58.1610:FF:000004">
    <property type="entry name" value="NADH-quinone oxidoreductase subunit A"/>
    <property type="match status" value="1"/>
</dbReference>
<dbReference type="Gene3D" id="1.20.58.1610">
    <property type="entry name" value="NADH:ubiquinone/plastoquinone oxidoreductase, chain 3"/>
    <property type="match status" value="1"/>
</dbReference>
<dbReference type="InterPro" id="IPR000440">
    <property type="entry name" value="NADH_UbQ/plastoQ_OxRdtase_su3"/>
</dbReference>
<dbReference type="InterPro" id="IPR038430">
    <property type="entry name" value="NDAH_ubi_oxred_su3_sf"/>
</dbReference>
<dbReference type="PANTHER" id="PTHR11058">
    <property type="entry name" value="NADH-UBIQUINONE OXIDOREDUCTASE CHAIN 3"/>
    <property type="match status" value="1"/>
</dbReference>
<dbReference type="PANTHER" id="PTHR11058:SF9">
    <property type="entry name" value="NADH-UBIQUINONE OXIDOREDUCTASE CHAIN 3"/>
    <property type="match status" value="1"/>
</dbReference>
<dbReference type="Pfam" id="PF00507">
    <property type="entry name" value="Oxidored_q4"/>
    <property type="match status" value="1"/>
</dbReference>
<reference key="1">
    <citation type="journal article" date="2007" name="Spec. Publ. Mus. Tex. Tech. Univ.">
        <title>Molecular phylogeny and taxonomic revision of the woolly lemurs, genus Avahi (primates: lemuriformes).</title>
        <authorList>
            <person name="Andriantompohavana R."/>
            <person name="Lei R."/>
            <person name="Zaonarivelo J.R."/>
            <person name="Engberg S.E."/>
            <person name="Nalanirina G."/>
            <person name="McGuire S.M."/>
            <person name="Shore G.D."/>
            <person name="Andrianasolo J."/>
            <person name="Herrington K."/>
            <person name="Brenneman R.A."/>
            <person name="Louis E.E. Jr."/>
        </authorList>
    </citation>
    <scope>NUCLEOTIDE SEQUENCE [GENOMIC DNA]</scope>
    <source>
        <strain>Isolate BEMA12</strain>
        <strain>Isolate BEMA13</strain>
        <strain>Isolate BEMA14</strain>
        <strain>Isolate BEMA8</strain>
        <strain>Isolate BEMA9</strain>
    </source>
</reference>
<evidence type="ECO:0000250" key="1">
    <source>
        <dbReference type="UniProtKB" id="P03897"/>
    </source>
</evidence>
<evidence type="ECO:0000250" key="2">
    <source>
        <dbReference type="UniProtKB" id="P03898"/>
    </source>
</evidence>
<evidence type="ECO:0000255" key="3"/>
<evidence type="ECO:0000305" key="4"/>
<comment type="function">
    <text evidence="1">Core subunit of the mitochondrial membrane respiratory chain NADH dehydrogenase (Complex I) which catalyzes electron transfer from NADH through the respiratory chain, using ubiquinone as an electron acceptor. Essential for the catalytic activity of complex I.</text>
</comment>
<comment type="catalytic activity">
    <reaction evidence="1">
        <text>a ubiquinone + NADH + 5 H(+)(in) = a ubiquinol + NAD(+) + 4 H(+)(out)</text>
        <dbReference type="Rhea" id="RHEA:29091"/>
        <dbReference type="Rhea" id="RHEA-COMP:9565"/>
        <dbReference type="Rhea" id="RHEA-COMP:9566"/>
        <dbReference type="ChEBI" id="CHEBI:15378"/>
        <dbReference type="ChEBI" id="CHEBI:16389"/>
        <dbReference type="ChEBI" id="CHEBI:17976"/>
        <dbReference type="ChEBI" id="CHEBI:57540"/>
        <dbReference type="ChEBI" id="CHEBI:57945"/>
        <dbReference type="EC" id="7.1.1.2"/>
    </reaction>
</comment>
<comment type="subunit">
    <text evidence="1">Core subunit of respiratory chain NADH dehydrogenase (Complex I) which is composed of 45 different subunits. Interacts with TMEM186. Interacts with TMEM242 (By similarity).</text>
</comment>
<comment type="subcellular location">
    <subcellularLocation>
        <location evidence="2">Mitochondrion inner membrane</location>
        <topology evidence="3">Multi-pass membrane protein</topology>
    </subcellularLocation>
</comment>
<comment type="similarity">
    <text evidence="4">Belongs to the complex I subunit 3 family.</text>
</comment>
<accession>A8DQK7</accession>
<accession>A8DQK3</accession>
<protein>
    <recommendedName>
        <fullName evidence="1">NADH-ubiquinone oxidoreductase chain 3</fullName>
        <ecNumber evidence="1">7.1.1.2</ecNumber>
    </recommendedName>
    <alternativeName>
        <fullName>NADH dehydrogenase subunit 3</fullName>
    </alternativeName>
</protein>
<keyword id="KW-0249">Electron transport</keyword>
<keyword id="KW-0472">Membrane</keyword>
<keyword id="KW-0496">Mitochondrion</keyword>
<keyword id="KW-0999">Mitochondrion inner membrane</keyword>
<keyword id="KW-0520">NAD</keyword>
<keyword id="KW-0679">Respiratory chain</keyword>
<keyword id="KW-1278">Translocase</keyword>
<keyword id="KW-0812">Transmembrane</keyword>
<keyword id="KW-1133">Transmembrane helix</keyword>
<keyword id="KW-0813">Transport</keyword>
<keyword id="KW-0830">Ubiquinone</keyword>